<protein>
    <recommendedName>
        <fullName evidence="6">Sensor histidine kinase EnvZ</fullName>
        <ecNumber evidence="1">2.7.13.3</ecNumber>
    </recommendedName>
    <alternativeName>
        <fullName evidence="6">Osmolarity sensor protein EnvZ</fullName>
    </alternativeName>
</protein>
<reference key="1">
    <citation type="journal article" date="2012" name="Proc. Natl. Acad. Sci. U.S.A.">
        <title>The transcriptional landscape and small RNAs of Salmonella enterica serovar Typhimurium.</title>
        <authorList>
            <person name="Kroger C."/>
            <person name="Dillon S.C."/>
            <person name="Cameron A.D."/>
            <person name="Papenfort K."/>
            <person name="Sivasankaran S.K."/>
            <person name="Hokamp K."/>
            <person name="Chao Y."/>
            <person name="Sittka A."/>
            <person name="Hebrard M."/>
            <person name="Handler K."/>
            <person name="Colgan A."/>
            <person name="Leekitcharoenphon P."/>
            <person name="Langridge G.C."/>
            <person name="Lohan A.J."/>
            <person name="Loftus B."/>
            <person name="Lucchini S."/>
            <person name="Ussery D.W."/>
            <person name="Dorman C.J."/>
            <person name="Thomson N.R."/>
            <person name="Vogel J."/>
            <person name="Hinton J.C."/>
        </authorList>
    </citation>
    <scope>NUCLEOTIDE SEQUENCE [LARGE SCALE GENOMIC DNA]</scope>
    <source>
        <strain>SL1344</strain>
    </source>
</reference>
<reference key="2">
    <citation type="journal article" date="1989" name="Infect. Immun.">
        <title>Characterization of porin and ompR mutants of a virulent strain of Salmonella typhimurium: ompR mutants are attenuated in vivo.</title>
        <authorList>
            <person name="Dorman C.J."/>
            <person name="Chatfield S."/>
            <person name="Higgins C.F."/>
            <person name="Hayward C."/>
            <person name="Dougan G."/>
        </authorList>
    </citation>
    <scope>FUNCTION</scope>
    <source>
        <strain>SL1344</strain>
    </source>
</reference>
<feature type="chain" id="PRO_0000448908" description="Sensor histidine kinase EnvZ">
    <location>
        <begin position="1"/>
        <end position="450"/>
    </location>
</feature>
<feature type="transmembrane region" description="Helical" evidence="2">
    <location>
        <begin position="15"/>
        <end position="35"/>
    </location>
</feature>
<feature type="transmembrane region" description="Helical" evidence="2">
    <location>
        <begin position="159"/>
        <end position="179"/>
    </location>
</feature>
<feature type="domain" description="HAMP" evidence="3">
    <location>
        <begin position="180"/>
        <end position="232"/>
    </location>
</feature>
<feature type="domain" description="Histidine kinase" evidence="4">
    <location>
        <begin position="240"/>
        <end position="440"/>
    </location>
</feature>
<feature type="region of interest" description="Cytoplasmic dimerization domain (CDD), when dimerized forms osmosensitive core" evidence="1">
    <location>
        <begin position="223"/>
        <end position="289"/>
    </location>
</feature>
<feature type="binding site" evidence="1">
    <location>
        <position position="243"/>
    </location>
    <ligand>
        <name>ATP</name>
        <dbReference type="ChEBI" id="CHEBI:30616"/>
    </ligand>
</feature>
<feature type="binding site" evidence="1">
    <location>
        <begin position="347"/>
        <end position="351"/>
    </location>
    <ligand>
        <name>ATP</name>
        <dbReference type="ChEBI" id="CHEBI:30616"/>
    </ligand>
</feature>
<feature type="binding site" evidence="1">
    <location>
        <position position="373"/>
    </location>
    <ligand>
        <name>ATP</name>
        <dbReference type="ChEBI" id="CHEBI:30616"/>
    </ligand>
</feature>
<feature type="binding site" evidence="1">
    <location>
        <begin position="392"/>
        <end position="393"/>
    </location>
    <ligand>
        <name>ATP</name>
        <dbReference type="ChEBI" id="CHEBI:30616"/>
    </ligand>
</feature>
<feature type="binding site" evidence="1">
    <location>
        <begin position="402"/>
        <end position="406"/>
    </location>
    <ligand>
        <name>ATP</name>
        <dbReference type="ChEBI" id="CHEBI:30616"/>
    </ligand>
</feature>
<feature type="modified residue" description="Phosphohistidine; by autocatalysis" evidence="1 4">
    <location>
        <position position="243"/>
    </location>
</feature>
<organism>
    <name type="scientific">Salmonella typhimurium (strain SL1344)</name>
    <dbReference type="NCBI Taxonomy" id="216597"/>
    <lineage>
        <taxon>Bacteria</taxon>
        <taxon>Pseudomonadati</taxon>
        <taxon>Pseudomonadota</taxon>
        <taxon>Gammaproteobacteria</taxon>
        <taxon>Enterobacterales</taxon>
        <taxon>Enterobacteriaceae</taxon>
        <taxon>Salmonella</taxon>
    </lineage>
</organism>
<comment type="function">
    <text evidence="5 7">Member of the two-component regulatory system EnvZ/OmpR involved in osmoregulation (particularly of genes ompF and ompC) as well as other genes (PubMed:2543631). EnvZ functions as a membrane-associated protein kinase that phosphorylates OmpR in response to environmental signals; at low osmolarity OmpR activates ompF transcription, while at high osmolarity it represses ompF and activates ompC transcription (Probable).</text>
</comment>
<comment type="catalytic activity">
    <reaction evidence="1">
        <text>ATP + protein L-histidine = ADP + protein N-phospho-L-histidine.</text>
        <dbReference type="EC" id="2.7.13.3"/>
    </reaction>
</comment>
<comment type="subunit">
    <text evidence="1">Homodimer.</text>
</comment>
<comment type="subcellular location">
    <subcellularLocation>
        <location evidence="1">Cell inner membrane</location>
        <topology evidence="2">Multi-pass membrane protein</topology>
    </subcellularLocation>
</comment>
<comment type="domain">
    <text evidence="1">Has several major domains; the N-terminal cytoplasmic domain is followed by 2 transmembrane helices that anchor the protein in the membrane; the periplasmic domain between the helices interacts with MrzA. The cytoplasmic C-terminal domain has a HAMP domain joined by a flexible linker to a histidine kinase domain. The HAMP domain by itself is intrinsically disordered. The cytoplasmic dimerization domain (CDD) forms an osmosensitive core and includes the autophosphorylated histidine residue.</text>
</comment>
<comment type="PTM">
    <text evidence="1">Autophosphorylated.</text>
</comment>
<comment type="sequence caution" evidence="6">
    <conflict type="erroneous initiation">
        <sequence resource="EMBL-CDS" id="CBW19563"/>
    </conflict>
    <text>Extended N-terminus.</text>
</comment>
<dbReference type="EC" id="2.7.13.3" evidence="1"/>
<dbReference type="EMBL" id="FQ312003">
    <property type="protein sequence ID" value="CBW19563.1"/>
    <property type="status" value="ALT_INIT"/>
    <property type="molecule type" value="Genomic_DNA"/>
</dbReference>
<dbReference type="RefSeq" id="WP_001253818.1">
    <property type="nucleotide sequence ID" value="NZ_QASL01000006.1"/>
</dbReference>
<dbReference type="SMR" id="A0A0H3NIL4"/>
<dbReference type="KEGG" id="sey:SL1344_3468"/>
<dbReference type="PATRIC" id="fig|216597.6.peg.3862"/>
<dbReference type="HOGENOM" id="CLU_000445_89_27_6"/>
<dbReference type="Proteomes" id="UP000008962">
    <property type="component" value="Chromosome"/>
</dbReference>
<dbReference type="GO" id="GO:0005886">
    <property type="term" value="C:plasma membrane"/>
    <property type="evidence" value="ECO:0007669"/>
    <property type="project" value="UniProtKB-SubCell"/>
</dbReference>
<dbReference type="GO" id="GO:0005524">
    <property type="term" value="F:ATP binding"/>
    <property type="evidence" value="ECO:0007669"/>
    <property type="project" value="UniProtKB-KW"/>
</dbReference>
<dbReference type="GO" id="GO:0000155">
    <property type="term" value="F:phosphorelay sensor kinase activity"/>
    <property type="evidence" value="ECO:0007669"/>
    <property type="project" value="InterPro"/>
</dbReference>
<dbReference type="CDD" id="cd06225">
    <property type="entry name" value="HAMP"/>
    <property type="match status" value="1"/>
</dbReference>
<dbReference type="CDD" id="cd16950">
    <property type="entry name" value="HATPase_EnvZ-like"/>
    <property type="match status" value="1"/>
</dbReference>
<dbReference type="CDD" id="cd00082">
    <property type="entry name" value="HisKA"/>
    <property type="match status" value="1"/>
</dbReference>
<dbReference type="FunFam" id="1.10.287.130:FF:000006">
    <property type="entry name" value="Osmolarity two-component histidine kinase EnvZ"/>
    <property type="match status" value="1"/>
</dbReference>
<dbReference type="FunFam" id="3.30.565.10:FF:000018">
    <property type="entry name" value="Two-component sensor kinase EnvZ"/>
    <property type="match status" value="1"/>
</dbReference>
<dbReference type="Gene3D" id="1.10.287.130">
    <property type="match status" value="1"/>
</dbReference>
<dbReference type="Gene3D" id="3.30.565.10">
    <property type="entry name" value="Histidine kinase-like ATPase, C-terminal domain"/>
    <property type="match status" value="1"/>
</dbReference>
<dbReference type="InterPro" id="IPR050980">
    <property type="entry name" value="2C_sensor_his_kinase"/>
</dbReference>
<dbReference type="InterPro" id="IPR003660">
    <property type="entry name" value="HAMP_dom"/>
</dbReference>
<dbReference type="InterPro" id="IPR036890">
    <property type="entry name" value="HATPase_C_sf"/>
</dbReference>
<dbReference type="InterPro" id="IPR005467">
    <property type="entry name" value="His_kinase_dom"/>
</dbReference>
<dbReference type="InterPro" id="IPR003661">
    <property type="entry name" value="HisK_dim/P_dom"/>
</dbReference>
<dbReference type="InterPro" id="IPR036097">
    <property type="entry name" value="HisK_dim/P_sf"/>
</dbReference>
<dbReference type="InterPro" id="IPR004358">
    <property type="entry name" value="Sig_transdc_His_kin-like_C"/>
</dbReference>
<dbReference type="NCBIfam" id="NF007004">
    <property type="entry name" value="PRK09467.1"/>
    <property type="match status" value="1"/>
</dbReference>
<dbReference type="PANTHER" id="PTHR44936:SF5">
    <property type="entry name" value="SENSOR HISTIDINE KINASE ENVZ"/>
    <property type="match status" value="1"/>
</dbReference>
<dbReference type="PANTHER" id="PTHR44936">
    <property type="entry name" value="SENSOR PROTEIN CREC"/>
    <property type="match status" value="1"/>
</dbReference>
<dbReference type="Pfam" id="PF00672">
    <property type="entry name" value="HAMP"/>
    <property type="match status" value="1"/>
</dbReference>
<dbReference type="Pfam" id="PF02518">
    <property type="entry name" value="HATPase_c"/>
    <property type="match status" value="1"/>
</dbReference>
<dbReference type="Pfam" id="PF00512">
    <property type="entry name" value="HisKA"/>
    <property type="match status" value="1"/>
</dbReference>
<dbReference type="PRINTS" id="PR00344">
    <property type="entry name" value="BCTRLSENSOR"/>
</dbReference>
<dbReference type="SMART" id="SM00304">
    <property type="entry name" value="HAMP"/>
    <property type="match status" value="1"/>
</dbReference>
<dbReference type="SMART" id="SM00387">
    <property type="entry name" value="HATPase_c"/>
    <property type="match status" value="1"/>
</dbReference>
<dbReference type="SMART" id="SM00388">
    <property type="entry name" value="HisKA"/>
    <property type="match status" value="1"/>
</dbReference>
<dbReference type="SUPFAM" id="SSF55874">
    <property type="entry name" value="ATPase domain of HSP90 chaperone/DNA topoisomerase II/histidine kinase"/>
    <property type="match status" value="1"/>
</dbReference>
<dbReference type="SUPFAM" id="SSF47384">
    <property type="entry name" value="Homodimeric domain of signal transducing histidine kinase"/>
    <property type="match status" value="1"/>
</dbReference>
<dbReference type="PROSITE" id="PS50885">
    <property type="entry name" value="HAMP"/>
    <property type="match status" value="1"/>
</dbReference>
<dbReference type="PROSITE" id="PS50109">
    <property type="entry name" value="HIS_KIN"/>
    <property type="match status" value="1"/>
</dbReference>
<sequence>MRRMRFSPRSSFARTLLLIVTLLFVSLVTTYLVVLNFAILPSLQQFNKVLAYEVRMLMTDKLQLEDGTQLVVPPAFRREIYRELGISLYTNEAAEEAGLRWAQHYEFLSHQMAQQLGGPTEVRVEVNKSSPVVWLKTWLSPNIWVRVPLTEIHQGDFSPLFRYTLAIMLLAIGGAWLFIRIQNRPLVDLEHAALQVGKGIIPPPLREYGASEVRSVTRAFNHMAAGVKQLADDRTLLMAGVSHDLRTPLTRIRLATEMMGEEDGYLAESINKDIEECNAIIEQFIDYLRTGQEMPMEMADLNSVLGEVIAAESGYEREINTALQAGSIQVKMHPLSIKRAVANMVVNAARYGNGWIKVSSGTESHRAWFQVEDDGPGIKPEQRKHLFQPFVRGDSARSTSGTGLGLAIVQRIIDNHNGMLEIGTSERGGLSIRAWLPVPVARVQGTTKEA</sequence>
<proteinExistence type="inferred from homology"/>
<keyword id="KW-0067">ATP-binding</keyword>
<keyword id="KW-0997">Cell inner membrane</keyword>
<keyword id="KW-1003">Cell membrane</keyword>
<keyword id="KW-0418">Kinase</keyword>
<keyword id="KW-0472">Membrane</keyword>
<keyword id="KW-0547">Nucleotide-binding</keyword>
<keyword id="KW-0597">Phosphoprotein</keyword>
<keyword id="KW-0346">Stress response</keyword>
<keyword id="KW-0808">Transferase</keyword>
<keyword id="KW-0812">Transmembrane</keyword>
<keyword id="KW-1133">Transmembrane helix</keyword>
<keyword id="KW-0902">Two-component regulatory system</keyword>
<keyword id="KW-0843">Virulence</keyword>
<gene>
    <name type="primary">envZ</name>
    <name type="ordered locus">SL1344_3468</name>
</gene>
<evidence type="ECO:0000250" key="1">
    <source>
        <dbReference type="UniProtKB" id="P0AEJ4"/>
    </source>
</evidence>
<evidence type="ECO:0000255" key="2"/>
<evidence type="ECO:0000255" key="3">
    <source>
        <dbReference type="PROSITE-ProRule" id="PRU00102"/>
    </source>
</evidence>
<evidence type="ECO:0000255" key="4">
    <source>
        <dbReference type="PROSITE-ProRule" id="PRU00107"/>
    </source>
</evidence>
<evidence type="ECO:0000269" key="5">
    <source>
    </source>
</evidence>
<evidence type="ECO:0000305" key="6"/>
<evidence type="ECO:0000305" key="7">
    <source>
    </source>
</evidence>
<name>ENVZ_SALTS</name>
<accession>A0A0H3NIL4</accession>